<organism>
    <name type="scientific">Pelobacter propionicus (strain DSM 2379 / NBRC 103807 / OttBd1)</name>
    <dbReference type="NCBI Taxonomy" id="338966"/>
    <lineage>
        <taxon>Bacteria</taxon>
        <taxon>Pseudomonadati</taxon>
        <taxon>Thermodesulfobacteriota</taxon>
        <taxon>Desulfuromonadia</taxon>
        <taxon>Desulfuromonadales</taxon>
        <taxon>Desulfuromonadaceae</taxon>
        <taxon>Pelobacter</taxon>
    </lineage>
</organism>
<reference key="1">
    <citation type="submission" date="2006-10" db="EMBL/GenBank/DDBJ databases">
        <title>Complete sequence of chromosome of Pelobacter propionicus DSM 2379.</title>
        <authorList>
            <consortium name="US DOE Joint Genome Institute"/>
            <person name="Copeland A."/>
            <person name="Lucas S."/>
            <person name="Lapidus A."/>
            <person name="Barry K."/>
            <person name="Detter J.C."/>
            <person name="Glavina del Rio T."/>
            <person name="Hammon N."/>
            <person name="Israni S."/>
            <person name="Dalin E."/>
            <person name="Tice H."/>
            <person name="Pitluck S."/>
            <person name="Saunders E."/>
            <person name="Brettin T."/>
            <person name="Bruce D."/>
            <person name="Han C."/>
            <person name="Tapia R."/>
            <person name="Schmutz J."/>
            <person name="Larimer F."/>
            <person name="Land M."/>
            <person name="Hauser L."/>
            <person name="Kyrpides N."/>
            <person name="Kim E."/>
            <person name="Lovley D."/>
            <person name="Richardson P."/>
        </authorList>
    </citation>
    <scope>NUCLEOTIDE SEQUENCE [LARGE SCALE GENOMIC DNA]</scope>
    <source>
        <strain>DSM 2379 / NBRC 103807 / OttBd1</strain>
    </source>
</reference>
<keyword id="KW-0067">ATP-binding</keyword>
<keyword id="KW-0963">Cytoplasm</keyword>
<keyword id="KW-0324">Glycolysis</keyword>
<keyword id="KW-0418">Kinase</keyword>
<keyword id="KW-0547">Nucleotide-binding</keyword>
<keyword id="KW-1185">Reference proteome</keyword>
<keyword id="KW-0808">Transferase</keyword>
<comment type="catalytic activity">
    <reaction evidence="1">
        <text>(2R)-3-phosphoglycerate + ATP = (2R)-3-phospho-glyceroyl phosphate + ADP</text>
        <dbReference type="Rhea" id="RHEA:14801"/>
        <dbReference type="ChEBI" id="CHEBI:30616"/>
        <dbReference type="ChEBI" id="CHEBI:57604"/>
        <dbReference type="ChEBI" id="CHEBI:58272"/>
        <dbReference type="ChEBI" id="CHEBI:456216"/>
        <dbReference type="EC" id="2.7.2.3"/>
    </reaction>
</comment>
<comment type="pathway">
    <text evidence="1">Carbohydrate degradation; glycolysis; pyruvate from D-glyceraldehyde 3-phosphate: step 2/5.</text>
</comment>
<comment type="subunit">
    <text evidence="1">Monomer.</text>
</comment>
<comment type="subcellular location">
    <subcellularLocation>
        <location evidence="1">Cytoplasm</location>
    </subcellularLocation>
</comment>
<comment type="similarity">
    <text evidence="1">Belongs to the phosphoglycerate kinase family.</text>
</comment>
<evidence type="ECO:0000255" key="1">
    <source>
        <dbReference type="HAMAP-Rule" id="MF_00145"/>
    </source>
</evidence>
<name>PGK_PELPD</name>
<dbReference type="EC" id="2.7.2.3" evidence="1"/>
<dbReference type="EMBL" id="CP000482">
    <property type="protein sequence ID" value="ABK99307.1"/>
    <property type="molecule type" value="Genomic_DNA"/>
</dbReference>
<dbReference type="RefSeq" id="WP_011735584.1">
    <property type="nucleotide sequence ID" value="NC_008609.1"/>
</dbReference>
<dbReference type="SMR" id="A1APN7"/>
<dbReference type="STRING" id="338966.Ppro_1694"/>
<dbReference type="KEGG" id="ppd:Ppro_1694"/>
<dbReference type="eggNOG" id="COG0126">
    <property type="taxonomic scope" value="Bacteria"/>
</dbReference>
<dbReference type="HOGENOM" id="CLU_025427_0_2_7"/>
<dbReference type="OrthoDB" id="9808460at2"/>
<dbReference type="UniPathway" id="UPA00109">
    <property type="reaction ID" value="UER00185"/>
</dbReference>
<dbReference type="Proteomes" id="UP000006732">
    <property type="component" value="Chromosome"/>
</dbReference>
<dbReference type="GO" id="GO:0005829">
    <property type="term" value="C:cytosol"/>
    <property type="evidence" value="ECO:0007669"/>
    <property type="project" value="TreeGrafter"/>
</dbReference>
<dbReference type="GO" id="GO:0043531">
    <property type="term" value="F:ADP binding"/>
    <property type="evidence" value="ECO:0007669"/>
    <property type="project" value="TreeGrafter"/>
</dbReference>
<dbReference type="GO" id="GO:0005524">
    <property type="term" value="F:ATP binding"/>
    <property type="evidence" value="ECO:0007669"/>
    <property type="project" value="UniProtKB-KW"/>
</dbReference>
<dbReference type="GO" id="GO:0004618">
    <property type="term" value="F:phosphoglycerate kinase activity"/>
    <property type="evidence" value="ECO:0007669"/>
    <property type="project" value="UniProtKB-UniRule"/>
</dbReference>
<dbReference type="GO" id="GO:0006094">
    <property type="term" value="P:gluconeogenesis"/>
    <property type="evidence" value="ECO:0007669"/>
    <property type="project" value="TreeGrafter"/>
</dbReference>
<dbReference type="GO" id="GO:0006096">
    <property type="term" value="P:glycolytic process"/>
    <property type="evidence" value="ECO:0007669"/>
    <property type="project" value="UniProtKB-UniRule"/>
</dbReference>
<dbReference type="CDD" id="cd00318">
    <property type="entry name" value="Phosphoglycerate_kinase"/>
    <property type="match status" value="1"/>
</dbReference>
<dbReference type="FunFam" id="3.40.50.1260:FF:000003">
    <property type="entry name" value="Phosphoglycerate kinase"/>
    <property type="match status" value="1"/>
</dbReference>
<dbReference type="FunFam" id="3.40.50.1260:FF:000006">
    <property type="entry name" value="Phosphoglycerate kinase"/>
    <property type="match status" value="1"/>
</dbReference>
<dbReference type="Gene3D" id="3.40.50.1260">
    <property type="entry name" value="Phosphoglycerate kinase, N-terminal domain"/>
    <property type="match status" value="2"/>
</dbReference>
<dbReference type="HAMAP" id="MF_00145">
    <property type="entry name" value="Phosphoglyc_kinase"/>
    <property type="match status" value="1"/>
</dbReference>
<dbReference type="InterPro" id="IPR001576">
    <property type="entry name" value="Phosphoglycerate_kinase"/>
</dbReference>
<dbReference type="InterPro" id="IPR015911">
    <property type="entry name" value="Phosphoglycerate_kinase_CS"/>
</dbReference>
<dbReference type="InterPro" id="IPR015824">
    <property type="entry name" value="Phosphoglycerate_kinase_N"/>
</dbReference>
<dbReference type="InterPro" id="IPR036043">
    <property type="entry name" value="Phosphoglycerate_kinase_sf"/>
</dbReference>
<dbReference type="PANTHER" id="PTHR11406">
    <property type="entry name" value="PHOSPHOGLYCERATE KINASE"/>
    <property type="match status" value="1"/>
</dbReference>
<dbReference type="PANTHER" id="PTHR11406:SF23">
    <property type="entry name" value="PHOSPHOGLYCERATE KINASE 1, CHLOROPLASTIC-RELATED"/>
    <property type="match status" value="1"/>
</dbReference>
<dbReference type="Pfam" id="PF00162">
    <property type="entry name" value="PGK"/>
    <property type="match status" value="1"/>
</dbReference>
<dbReference type="PIRSF" id="PIRSF000724">
    <property type="entry name" value="Pgk"/>
    <property type="match status" value="1"/>
</dbReference>
<dbReference type="PRINTS" id="PR00477">
    <property type="entry name" value="PHGLYCKINASE"/>
</dbReference>
<dbReference type="SUPFAM" id="SSF53748">
    <property type="entry name" value="Phosphoglycerate kinase"/>
    <property type="match status" value="1"/>
</dbReference>
<dbReference type="PROSITE" id="PS00111">
    <property type="entry name" value="PGLYCERATE_KINASE"/>
    <property type="match status" value="1"/>
</dbReference>
<proteinExistence type="inferred from homology"/>
<gene>
    <name evidence="1" type="primary">pgk</name>
    <name type="ordered locus">Ppro_1694</name>
</gene>
<feature type="chain" id="PRO_1000009642" description="Phosphoglycerate kinase">
    <location>
        <begin position="1"/>
        <end position="399"/>
    </location>
</feature>
<feature type="binding site" evidence="1">
    <location>
        <begin position="22"/>
        <end position="24"/>
    </location>
    <ligand>
        <name>substrate</name>
    </ligand>
</feature>
<feature type="binding site" evidence="1">
    <location>
        <position position="38"/>
    </location>
    <ligand>
        <name>substrate</name>
    </ligand>
</feature>
<feature type="binding site" evidence="1">
    <location>
        <begin position="61"/>
        <end position="64"/>
    </location>
    <ligand>
        <name>substrate</name>
    </ligand>
</feature>
<feature type="binding site" evidence="1">
    <location>
        <position position="120"/>
    </location>
    <ligand>
        <name>substrate</name>
    </ligand>
</feature>
<feature type="binding site" evidence="1">
    <location>
        <position position="153"/>
    </location>
    <ligand>
        <name>substrate</name>
    </ligand>
</feature>
<feature type="binding site" evidence="1">
    <location>
        <position position="204"/>
    </location>
    <ligand>
        <name>ATP</name>
        <dbReference type="ChEBI" id="CHEBI:30616"/>
    </ligand>
</feature>
<feature type="binding site" evidence="1">
    <location>
        <position position="326"/>
    </location>
    <ligand>
        <name>ATP</name>
        <dbReference type="ChEBI" id="CHEBI:30616"/>
    </ligand>
</feature>
<feature type="binding site" evidence="1">
    <location>
        <begin position="352"/>
        <end position="355"/>
    </location>
    <ligand>
        <name>ATP</name>
        <dbReference type="ChEBI" id="CHEBI:30616"/>
    </ligand>
</feature>
<accession>A1APN7</accession>
<protein>
    <recommendedName>
        <fullName evidence="1">Phosphoglycerate kinase</fullName>
        <ecNumber evidence="1">2.7.2.3</ecNumber>
    </recommendedName>
</protein>
<sequence>MPIRYIDQLADLKDKKVFIRVDFNVPQDSKGNITEDTRITGALPTIRYAIEQGARVILASHLGRPKGEKNEKYSMVPAAKRLSELLGRKVKQASDCFGEEVTREIDAMKSGEVLMLENVRFYPGEEKNDPKFAQQLANGCQVYVNDAFAVSHRAHASVEAITRVIPTVVAGFLMRNEMTFFDKAMQNPVRPLVAILGGAKVSGKLEVLEKLMNKVDKVVIGGGMAFTFLKSMGYSVGASKVEDELLPTAKKIMDKARKKGIMFYLPVDCVVANAFEASATNFITTVQEIPEGWLALDIGPASATLFTETLRDAKTVIWNGPMGVFEMDAFARGTFAVAEAVASAFATTIIGGGDTDSAVRKAGVESKVSYISTGGGAFLELLEGKVLPGVKALDIKVKK</sequence>